<protein>
    <recommendedName>
        <fullName evidence="1">Glycine--tRNA ligase alpha subunit</fullName>
        <ecNumber evidence="1">6.1.1.14</ecNumber>
    </recommendedName>
    <alternativeName>
        <fullName evidence="1">Glycyl-tRNA synthetase alpha subunit</fullName>
        <shortName evidence="1">GlyRS</shortName>
    </alternativeName>
</protein>
<comment type="catalytic activity">
    <reaction evidence="1">
        <text>tRNA(Gly) + glycine + ATP = glycyl-tRNA(Gly) + AMP + diphosphate</text>
        <dbReference type="Rhea" id="RHEA:16013"/>
        <dbReference type="Rhea" id="RHEA-COMP:9664"/>
        <dbReference type="Rhea" id="RHEA-COMP:9683"/>
        <dbReference type="ChEBI" id="CHEBI:30616"/>
        <dbReference type="ChEBI" id="CHEBI:33019"/>
        <dbReference type="ChEBI" id="CHEBI:57305"/>
        <dbReference type="ChEBI" id="CHEBI:78442"/>
        <dbReference type="ChEBI" id="CHEBI:78522"/>
        <dbReference type="ChEBI" id="CHEBI:456215"/>
        <dbReference type="EC" id="6.1.1.14"/>
    </reaction>
</comment>
<comment type="subunit">
    <text evidence="1">Tetramer of two alpha and two beta subunits.</text>
</comment>
<comment type="subcellular location">
    <subcellularLocation>
        <location evidence="1">Cytoplasm</location>
    </subcellularLocation>
</comment>
<comment type="similarity">
    <text evidence="1">Belongs to the class-II aminoacyl-tRNA synthetase family.</text>
</comment>
<gene>
    <name evidence="1" type="primary">glyQ</name>
    <name type="ordered locus">plu0293</name>
</gene>
<dbReference type="EC" id="6.1.1.14" evidence="1"/>
<dbReference type="EMBL" id="BX571859">
    <property type="protein sequence ID" value="CAE12588.1"/>
    <property type="molecule type" value="Genomic_DNA"/>
</dbReference>
<dbReference type="RefSeq" id="WP_011144691.1">
    <property type="nucleotide sequence ID" value="NC_005126.1"/>
</dbReference>
<dbReference type="SMR" id="Q7N9M7"/>
<dbReference type="STRING" id="243265.plu0293"/>
<dbReference type="GeneID" id="48846584"/>
<dbReference type="KEGG" id="plu:plu0293"/>
<dbReference type="eggNOG" id="COG0752">
    <property type="taxonomic scope" value="Bacteria"/>
</dbReference>
<dbReference type="HOGENOM" id="CLU_057066_1_0_6"/>
<dbReference type="OrthoDB" id="9802183at2"/>
<dbReference type="Proteomes" id="UP000002514">
    <property type="component" value="Chromosome"/>
</dbReference>
<dbReference type="GO" id="GO:0005829">
    <property type="term" value="C:cytosol"/>
    <property type="evidence" value="ECO:0007669"/>
    <property type="project" value="TreeGrafter"/>
</dbReference>
<dbReference type="GO" id="GO:0005524">
    <property type="term" value="F:ATP binding"/>
    <property type="evidence" value="ECO:0007669"/>
    <property type="project" value="UniProtKB-UniRule"/>
</dbReference>
<dbReference type="GO" id="GO:0004820">
    <property type="term" value="F:glycine-tRNA ligase activity"/>
    <property type="evidence" value="ECO:0007669"/>
    <property type="project" value="UniProtKB-UniRule"/>
</dbReference>
<dbReference type="GO" id="GO:0006426">
    <property type="term" value="P:glycyl-tRNA aminoacylation"/>
    <property type="evidence" value="ECO:0007669"/>
    <property type="project" value="UniProtKB-UniRule"/>
</dbReference>
<dbReference type="CDD" id="cd00733">
    <property type="entry name" value="GlyRS_alpha_core"/>
    <property type="match status" value="1"/>
</dbReference>
<dbReference type="FunFam" id="1.20.58.180:FF:000001">
    <property type="entry name" value="Glycine--tRNA ligase alpha subunit"/>
    <property type="match status" value="1"/>
</dbReference>
<dbReference type="FunFam" id="3.30.930.10:FF:000006">
    <property type="entry name" value="Glycine--tRNA ligase alpha subunit"/>
    <property type="match status" value="1"/>
</dbReference>
<dbReference type="Gene3D" id="3.30.930.10">
    <property type="entry name" value="Bira Bifunctional Protein, Domain 2"/>
    <property type="match status" value="1"/>
</dbReference>
<dbReference type="Gene3D" id="1.20.58.180">
    <property type="entry name" value="Class II aaRS and biotin synthetases, domain 2"/>
    <property type="match status" value="1"/>
</dbReference>
<dbReference type="HAMAP" id="MF_00254">
    <property type="entry name" value="Gly_tRNA_synth_alpha"/>
    <property type="match status" value="1"/>
</dbReference>
<dbReference type="InterPro" id="IPR045864">
    <property type="entry name" value="aa-tRNA-synth_II/BPL/LPL"/>
</dbReference>
<dbReference type="InterPro" id="IPR006194">
    <property type="entry name" value="Gly-tRNA-synth_heterodimer"/>
</dbReference>
<dbReference type="InterPro" id="IPR002310">
    <property type="entry name" value="Gly-tRNA_ligase_asu"/>
</dbReference>
<dbReference type="NCBIfam" id="TIGR00388">
    <property type="entry name" value="glyQ"/>
    <property type="match status" value="1"/>
</dbReference>
<dbReference type="NCBIfam" id="NF006827">
    <property type="entry name" value="PRK09348.1"/>
    <property type="match status" value="1"/>
</dbReference>
<dbReference type="PANTHER" id="PTHR30075:SF2">
    <property type="entry name" value="GLYCINE--TRNA LIGASE, CHLOROPLASTIC_MITOCHONDRIAL 2"/>
    <property type="match status" value="1"/>
</dbReference>
<dbReference type="PANTHER" id="PTHR30075">
    <property type="entry name" value="GLYCYL-TRNA SYNTHETASE"/>
    <property type="match status" value="1"/>
</dbReference>
<dbReference type="Pfam" id="PF02091">
    <property type="entry name" value="tRNA-synt_2e"/>
    <property type="match status" value="1"/>
</dbReference>
<dbReference type="PRINTS" id="PR01044">
    <property type="entry name" value="TRNASYNTHGA"/>
</dbReference>
<dbReference type="SUPFAM" id="SSF55681">
    <property type="entry name" value="Class II aaRS and biotin synthetases"/>
    <property type="match status" value="1"/>
</dbReference>
<dbReference type="PROSITE" id="PS50861">
    <property type="entry name" value="AA_TRNA_LIGASE_II_GLYAB"/>
    <property type="match status" value="1"/>
</dbReference>
<keyword id="KW-0030">Aminoacyl-tRNA synthetase</keyword>
<keyword id="KW-0067">ATP-binding</keyword>
<keyword id="KW-0963">Cytoplasm</keyword>
<keyword id="KW-0436">Ligase</keyword>
<keyword id="KW-0547">Nucleotide-binding</keyword>
<keyword id="KW-0648">Protein biosynthesis</keyword>
<keyword id="KW-1185">Reference proteome</keyword>
<evidence type="ECO:0000255" key="1">
    <source>
        <dbReference type="HAMAP-Rule" id="MF_00254"/>
    </source>
</evidence>
<organism>
    <name type="scientific">Photorhabdus laumondii subsp. laumondii (strain DSM 15139 / CIP 105565 / TT01)</name>
    <name type="common">Photorhabdus luminescens subsp. laumondii</name>
    <dbReference type="NCBI Taxonomy" id="243265"/>
    <lineage>
        <taxon>Bacteria</taxon>
        <taxon>Pseudomonadati</taxon>
        <taxon>Pseudomonadota</taxon>
        <taxon>Gammaproteobacteria</taxon>
        <taxon>Enterobacterales</taxon>
        <taxon>Morganellaceae</taxon>
        <taxon>Photorhabdus</taxon>
    </lineage>
</organism>
<sequence>MQKFDTKTFQGLILTLQDYWARQGCTIVQPLDMEVGAGTSHPITCLRALGPEPIAAAYVQPSRRPTDGRYGENPNRLQHYYQFQVIIKPSPDNIQELYLDSLKALGLDPTVHDIRFVEDNWENPTLGAWGLGWEVWLNGMEVTQFTYFQQVGGLECKPVTGEITYGLERLAMYIQGVDSVYDLVWCDGPLGKTTYGDIYHQNEVEQSTYNFEHADVDFLFTCFEQYEKEAQDLLALETPLPLPAYERILKAGHTFNLLDARKAISVTERQRYILRIRTLTKAVAEAYYASREALGFPMCNKNQN</sequence>
<reference key="1">
    <citation type="journal article" date="2003" name="Nat. Biotechnol.">
        <title>The genome sequence of the entomopathogenic bacterium Photorhabdus luminescens.</title>
        <authorList>
            <person name="Duchaud E."/>
            <person name="Rusniok C."/>
            <person name="Frangeul L."/>
            <person name="Buchrieser C."/>
            <person name="Givaudan A."/>
            <person name="Taourit S."/>
            <person name="Bocs S."/>
            <person name="Boursaux-Eude C."/>
            <person name="Chandler M."/>
            <person name="Charles J.-F."/>
            <person name="Dassa E."/>
            <person name="Derose R."/>
            <person name="Derzelle S."/>
            <person name="Freyssinet G."/>
            <person name="Gaudriault S."/>
            <person name="Medigue C."/>
            <person name="Lanois A."/>
            <person name="Powell K."/>
            <person name="Siguier P."/>
            <person name="Vincent R."/>
            <person name="Wingate V."/>
            <person name="Zouine M."/>
            <person name="Glaser P."/>
            <person name="Boemare N."/>
            <person name="Danchin A."/>
            <person name="Kunst F."/>
        </authorList>
    </citation>
    <scope>NUCLEOTIDE SEQUENCE [LARGE SCALE GENOMIC DNA]</scope>
    <source>
        <strain>DSM 15139 / CIP 105565 / TT01</strain>
    </source>
</reference>
<accession>Q7N9M7</accession>
<name>SYGA_PHOLL</name>
<feature type="chain" id="PRO_1000047457" description="Glycine--tRNA ligase alpha subunit">
    <location>
        <begin position="1"/>
        <end position="304"/>
    </location>
</feature>
<proteinExistence type="inferred from homology"/>